<organism>
    <name type="scientific">Pongo abelii</name>
    <name type="common">Sumatran orangutan</name>
    <name type="synonym">Pongo pygmaeus abelii</name>
    <dbReference type="NCBI Taxonomy" id="9601"/>
    <lineage>
        <taxon>Eukaryota</taxon>
        <taxon>Metazoa</taxon>
        <taxon>Chordata</taxon>
        <taxon>Craniata</taxon>
        <taxon>Vertebrata</taxon>
        <taxon>Euteleostomi</taxon>
        <taxon>Mammalia</taxon>
        <taxon>Eutheria</taxon>
        <taxon>Euarchontoglires</taxon>
        <taxon>Primates</taxon>
        <taxon>Haplorrhini</taxon>
        <taxon>Catarrhini</taxon>
        <taxon>Hominidae</taxon>
        <taxon>Pongo</taxon>
    </lineage>
</organism>
<keyword id="KW-0007">Acetylation</keyword>
<keyword id="KW-0030">Aminoacyl-tRNA synthetase</keyword>
<keyword id="KW-0067">ATP-binding</keyword>
<keyword id="KW-0963">Cytoplasm</keyword>
<keyword id="KW-0436">Ligase</keyword>
<keyword id="KW-0547">Nucleotide-binding</keyword>
<keyword id="KW-0597">Phosphoprotein</keyword>
<keyword id="KW-0648">Protein biosynthesis</keyword>
<keyword id="KW-1185">Reference proteome</keyword>
<feature type="chain" id="PRO_0000229767" description="Leucine--tRNA ligase, cytoplasmic">
    <location>
        <begin position="1"/>
        <end position="1176"/>
    </location>
</feature>
<feature type="region of interest" description="Disordered" evidence="4">
    <location>
        <begin position="115"/>
        <end position="142"/>
    </location>
</feature>
<feature type="region of interest" description="Editing domain" evidence="3">
    <location>
        <begin position="260"/>
        <end position="509"/>
    </location>
</feature>
<feature type="short sequence motif" description="'HIGH' region" evidence="3">
    <location>
        <begin position="60"/>
        <end position="63"/>
    </location>
</feature>
<feature type="short sequence motif" description="'KMSKS' region" evidence="3">
    <location>
        <begin position="716"/>
        <end position="720"/>
    </location>
</feature>
<feature type="compositionally biased region" description="Acidic residues" evidence="4">
    <location>
        <begin position="117"/>
        <end position="126"/>
    </location>
</feature>
<feature type="compositionally biased region" description="Basic and acidic residues" evidence="4">
    <location>
        <begin position="127"/>
        <end position="139"/>
    </location>
</feature>
<feature type="binding site" evidence="3">
    <location>
        <position position="52"/>
    </location>
    <ligand>
        <name>L-leucine</name>
        <dbReference type="ChEBI" id="CHEBI:57427"/>
    </ligand>
</feature>
<feature type="binding site" evidence="3">
    <location>
        <position position="54"/>
    </location>
    <ligand>
        <name>L-leucine</name>
        <dbReference type="ChEBI" id="CHEBI:57427"/>
    </ligand>
</feature>
<feature type="binding site" evidence="3">
    <location>
        <position position="594"/>
    </location>
    <ligand>
        <name>L-leucine</name>
        <dbReference type="ChEBI" id="CHEBI:57427"/>
    </ligand>
</feature>
<feature type="binding site" evidence="3">
    <location>
        <position position="597"/>
    </location>
    <ligand>
        <name>L-leucine</name>
        <dbReference type="ChEBI" id="CHEBI:57427"/>
    </ligand>
</feature>
<feature type="binding site" evidence="3">
    <location>
        <position position="719"/>
    </location>
    <ligand>
        <name>ATP</name>
        <dbReference type="ChEBI" id="CHEBI:30616"/>
    </ligand>
</feature>
<feature type="modified residue" description="Phosphoserine" evidence="3">
    <location>
        <position position="167"/>
    </location>
</feature>
<feature type="modified residue" description="Phosphoserine" evidence="3">
    <location>
        <position position="720"/>
    </location>
</feature>
<feature type="modified residue" description="N6-acetyllysine" evidence="2">
    <location>
        <position position="970"/>
    </location>
</feature>
<feature type="modified residue" description="N6-acetyllysine" evidence="2">
    <location>
        <position position="1047"/>
    </location>
</feature>
<comment type="function">
    <text evidence="3">Aminoacyl-tRNA synthetase that catalyzes the specific attachment of leucine to its cognate tRNA (tRNA(Leu)). It performs tRNA aminoacylation in a two-step reaction: Leu is initially activated by ATP to form a leucyl-adenylate (Leu-AMP) intermediate; then the leucyl moiety is transferred to the acceptor 3' end of the tRNA to yield leucyl-tRNA. To improve the fidelity of catalytic reactions, it is also able to hydrolyze misactivated aminoacyl-adenylate intermediates (pre-transfer editing) and mischarged aminoacyl-tRNAs (post-transfer editing).</text>
</comment>
<comment type="catalytic activity">
    <reaction evidence="3">
        <text>tRNA(Leu) + L-leucine + ATP = L-leucyl-tRNA(Leu) + AMP + diphosphate</text>
        <dbReference type="Rhea" id="RHEA:11688"/>
        <dbReference type="Rhea" id="RHEA-COMP:9613"/>
        <dbReference type="Rhea" id="RHEA-COMP:9622"/>
        <dbReference type="ChEBI" id="CHEBI:30616"/>
        <dbReference type="ChEBI" id="CHEBI:33019"/>
        <dbReference type="ChEBI" id="CHEBI:57427"/>
        <dbReference type="ChEBI" id="CHEBI:78442"/>
        <dbReference type="ChEBI" id="CHEBI:78494"/>
        <dbReference type="ChEBI" id="CHEBI:456215"/>
        <dbReference type="EC" id="6.1.1.4"/>
    </reaction>
    <physiologicalReaction direction="left-to-right" evidence="3">
        <dbReference type="Rhea" id="RHEA:11689"/>
    </physiologicalReaction>
</comment>
<comment type="catalytic activity">
    <reaction evidence="3">
        <text>L-methionyl-tRNA(Leu) + H2O = tRNA(Leu) + L-methionine + H(+)</text>
        <dbReference type="Rhea" id="RHEA:77535"/>
        <dbReference type="Rhea" id="RHEA-COMP:9613"/>
        <dbReference type="Rhea" id="RHEA-COMP:18931"/>
        <dbReference type="ChEBI" id="CHEBI:15377"/>
        <dbReference type="ChEBI" id="CHEBI:15378"/>
        <dbReference type="ChEBI" id="CHEBI:57844"/>
        <dbReference type="ChEBI" id="CHEBI:78442"/>
        <dbReference type="ChEBI" id="CHEBI:78530"/>
    </reaction>
    <physiologicalReaction direction="left-to-right" evidence="3">
        <dbReference type="Rhea" id="RHEA:77536"/>
    </physiologicalReaction>
</comment>
<comment type="activity regulation">
    <text evidence="3">5-fluoro-1,3-dihydro-1-hydroxy-1,2-benzoxaborole inhibits LARS1 by forming a covalent adduct with the 3' adenosine of tRNA(Leu) at the editing site, thus locking the enzyme in an inactive conformation.</text>
</comment>
<comment type="subcellular location">
    <subcellularLocation>
        <location evidence="1">Cytoplasm</location>
    </subcellularLocation>
</comment>
<comment type="domain">
    <text evidence="3">The structure of cytoplasmic leucine-tRNA ligase includes four main functional domains: the Rossmann-fold aminoacylation domain, the editing domain known as connective peptide 1 (CP1), the anticodon binding domain for tRNA recognition, and the vertebrate C-terminal (VC) domain for tRNA binding.</text>
</comment>
<comment type="similarity">
    <text evidence="5">Belongs to the class-I aminoacyl-tRNA synthetase family.</text>
</comment>
<evidence type="ECO:0000250" key="1"/>
<evidence type="ECO:0000250" key="2">
    <source>
        <dbReference type="UniProtKB" id="Q8BMJ2"/>
    </source>
</evidence>
<evidence type="ECO:0000250" key="3">
    <source>
        <dbReference type="UniProtKB" id="Q9P2J5"/>
    </source>
</evidence>
<evidence type="ECO:0000256" key="4">
    <source>
        <dbReference type="SAM" id="MobiDB-lite"/>
    </source>
</evidence>
<evidence type="ECO:0000305" key="5"/>
<name>SYLC_PONAB</name>
<gene>
    <name type="primary">LARS1</name>
    <name type="synonym">LARS</name>
</gene>
<proteinExistence type="evidence at transcript level"/>
<dbReference type="EC" id="6.1.1.4" evidence="3"/>
<dbReference type="EMBL" id="CR860686">
    <property type="protein sequence ID" value="CAH92802.1"/>
    <property type="molecule type" value="mRNA"/>
</dbReference>
<dbReference type="SMR" id="Q5R614"/>
<dbReference type="FunCoup" id="Q5R614">
    <property type="interactions" value="3507"/>
</dbReference>
<dbReference type="STRING" id="9601.ENSPPYP00000017795"/>
<dbReference type="eggNOG" id="KOG0437">
    <property type="taxonomic scope" value="Eukaryota"/>
</dbReference>
<dbReference type="InParanoid" id="Q5R614"/>
<dbReference type="Proteomes" id="UP000001595">
    <property type="component" value="Unplaced"/>
</dbReference>
<dbReference type="GO" id="GO:0005737">
    <property type="term" value="C:cytoplasm"/>
    <property type="evidence" value="ECO:0007669"/>
    <property type="project" value="UniProtKB-SubCell"/>
</dbReference>
<dbReference type="GO" id="GO:0002161">
    <property type="term" value="F:aminoacyl-tRNA deacylase activity"/>
    <property type="evidence" value="ECO:0000250"/>
    <property type="project" value="UniProtKB"/>
</dbReference>
<dbReference type="GO" id="GO:0005524">
    <property type="term" value="F:ATP binding"/>
    <property type="evidence" value="ECO:0007669"/>
    <property type="project" value="UniProtKB-KW"/>
</dbReference>
<dbReference type="GO" id="GO:0004823">
    <property type="term" value="F:leucine-tRNA ligase activity"/>
    <property type="evidence" value="ECO:0000250"/>
    <property type="project" value="UniProtKB"/>
</dbReference>
<dbReference type="GO" id="GO:0006429">
    <property type="term" value="P:leucyl-tRNA aminoacylation"/>
    <property type="evidence" value="ECO:0000250"/>
    <property type="project" value="UniProtKB"/>
</dbReference>
<dbReference type="CDD" id="cd07959">
    <property type="entry name" value="Anticodon_Ia_Leu_AEc"/>
    <property type="match status" value="1"/>
</dbReference>
<dbReference type="FunFam" id="3.40.50.620:FF:000326">
    <property type="entry name" value="Leucine--tRNA ligase, cytoplasmic"/>
    <property type="match status" value="1"/>
</dbReference>
<dbReference type="FunFam" id="3.90.740.10:FF:000001">
    <property type="entry name" value="Leucine--tRNA ligase, cytoplasmic"/>
    <property type="match status" value="1"/>
</dbReference>
<dbReference type="FunFam" id="1.10.730.10:FF:000013">
    <property type="entry name" value="leucine--tRNA ligase, cytoplasmic"/>
    <property type="match status" value="1"/>
</dbReference>
<dbReference type="Gene3D" id="3.40.50.620">
    <property type="entry name" value="HUPs"/>
    <property type="match status" value="1"/>
</dbReference>
<dbReference type="Gene3D" id="1.10.730.10">
    <property type="entry name" value="Isoleucyl-tRNA Synthetase, Domain 1"/>
    <property type="match status" value="1"/>
</dbReference>
<dbReference type="Gene3D" id="3.90.740.10">
    <property type="entry name" value="Valyl/Leucyl/Isoleucyl-tRNA synthetase, editing domain"/>
    <property type="match status" value="1"/>
</dbReference>
<dbReference type="InterPro" id="IPR001412">
    <property type="entry name" value="aa-tRNA-synth_I_CS"/>
</dbReference>
<dbReference type="InterPro" id="IPR002300">
    <property type="entry name" value="aa-tRNA-synth_Ia"/>
</dbReference>
<dbReference type="InterPro" id="IPR054509">
    <property type="entry name" value="LARS1_ULD"/>
</dbReference>
<dbReference type="InterPro" id="IPR004493">
    <property type="entry name" value="Leu-tRNA-synth_Ia_arc/euk"/>
</dbReference>
<dbReference type="InterPro" id="IPR013155">
    <property type="entry name" value="M/V/L/I-tRNA-synth_anticd-bd"/>
</dbReference>
<dbReference type="InterPro" id="IPR055416">
    <property type="entry name" value="RBD_LARS1"/>
</dbReference>
<dbReference type="InterPro" id="IPR014729">
    <property type="entry name" value="Rossmann-like_a/b/a_fold"/>
</dbReference>
<dbReference type="InterPro" id="IPR009080">
    <property type="entry name" value="tRNAsynth_Ia_anticodon-bd"/>
</dbReference>
<dbReference type="InterPro" id="IPR009008">
    <property type="entry name" value="Val/Leu/Ile-tRNA-synth_edit"/>
</dbReference>
<dbReference type="NCBIfam" id="TIGR00395">
    <property type="entry name" value="leuS_arch"/>
    <property type="match status" value="1"/>
</dbReference>
<dbReference type="NCBIfam" id="NF008957">
    <property type="entry name" value="PRK12300.1"/>
    <property type="match status" value="1"/>
</dbReference>
<dbReference type="PANTHER" id="PTHR45794:SF1">
    <property type="entry name" value="LEUCINE--TRNA LIGASE, CYTOPLASMIC"/>
    <property type="match status" value="1"/>
</dbReference>
<dbReference type="PANTHER" id="PTHR45794">
    <property type="entry name" value="LEUCYL-TRNA SYNTHETASE"/>
    <property type="match status" value="1"/>
</dbReference>
<dbReference type="Pfam" id="PF08264">
    <property type="entry name" value="Anticodon_1"/>
    <property type="match status" value="1"/>
</dbReference>
<dbReference type="Pfam" id="PF24810">
    <property type="entry name" value="RBD_LARS1"/>
    <property type="match status" value="1"/>
</dbReference>
<dbReference type="Pfam" id="PF00133">
    <property type="entry name" value="tRNA-synt_1"/>
    <property type="match status" value="2"/>
</dbReference>
<dbReference type="Pfam" id="PF22947">
    <property type="entry name" value="ULD_3"/>
    <property type="match status" value="1"/>
</dbReference>
<dbReference type="SUPFAM" id="SSF47323">
    <property type="entry name" value="Anticodon-binding domain of a subclass of class I aminoacyl-tRNA synthetases"/>
    <property type="match status" value="1"/>
</dbReference>
<dbReference type="SUPFAM" id="SSF52374">
    <property type="entry name" value="Nucleotidylyl transferase"/>
    <property type="match status" value="1"/>
</dbReference>
<dbReference type="SUPFAM" id="SSF50677">
    <property type="entry name" value="ValRS/IleRS/LeuRS editing domain"/>
    <property type="match status" value="1"/>
</dbReference>
<dbReference type="PROSITE" id="PS00178">
    <property type="entry name" value="AA_TRNA_LIGASE_I"/>
    <property type="match status" value="1"/>
</dbReference>
<sequence length="1176" mass="134562">MAERKGTAKVDFLKKIEKEIQQKWDTERVFEVNASSLEKQTSKGKYFVTFPYPYMNGRLHLGHTFSLSKCEFAVGYQRLKGKCCLFPFGLHCTGMPIKACADKLKREIELYGCPPDFPDEEDEEEETNVKTEDTRIKDKAKGKKSKAAAKAGSSKYQWGIMKSLGLSDEEIVKFSEAEHWLDYFPPLAIQDLKRLGLKVDWRRSFITTDVNPYYDSFVRWQFLTLRERNKIKFGKRYTIYSPKDGQPCMDHDRQTGEGVGPQEYTLLKLKVLEPYPSKLSGLKGKNIFLVAATLRPETLFGQTNCWVRPDMKYIGFETVNGDIFICTQKAARNMSYQGFTKDNGVVPVVKELMGEEILGASLSAPLTSYKVIYVLPMLTIKEDKGTGVVTSVPSDSPDDIAALRDLKKKQALRAKYGIRDDMVLPFEPVPVIEIPGFGNLSAVTICDELKIQSQNDREKLAEAKEKIYLKGFYEGIMLVDGFKGQKVQDVKKTIQKKMIDAGDALIYMEPEKQVMSRSSDECVVALCDQWYLDYGEENWKKQTSQCLKNLETFCEETRRNFEATLGWLQEHACSRTYGLGTHLPWDEQWLIESLSDSTIYMAFYTVAHLLQGGNLHGQAESPLGIRPQQMTKEVWDYVFFKEAPFPKTQIAKEKLDQLKQEFEFWYPVDLRVSGKDLVPNHLSYYLYNHVAMWPEQSDKWPTAVRANGHLLLNSEKMSKSTGNFLTLTQAIDKFSADGMRLALADAGDTVEDANFVEAMADAGILRLYTWVEWVKEMVANWDSLRSGPANTFNDRVFASELNAGIIKTDQNYEKMMFKEALKTGFFEFQAAKDKYRELAVEGMHRELVFRFIEVQTLLLAPFCPHLCEHIWTLLGKPDSIMNASWPVAGPVDEVLIHSSQYLMEVTHDLRLRLKNYMMPAKGKKTDKQPLQKPSHCTIYVAKNYPPWQHTTLSVLRKHFEANNRKLPDNKVIASELGSMPELKKYMKKVMPFVAMIKENLEKMGPRILDLQLEFDEKAVLMENIVYLTNSLELEHIEVKFASEAEDKIREDCCPGKPLNVFRIEPGVSISLVNPQPSNGHFSTKIEIRQGDNCDSIIRRLMKMNRGIKDLSKVKLMRFDDPLLGPRRVPVLGKEHTEKTPISEHAVFNVDLMSKKIHLTENGIRVDIGDTIIYLVH</sequence>
<protein>
    <recommendedName>
        <fullName evidence="3">Leucine--tRNA ligase, cytoplasmic</fullName>
        <ecNumber evidence="3">6.1.1.4</ecNumber>
    </recommendedName>
    <alternativeName>
        <fullName evidence="3">Leucyl-tRNA synthetase</fullName>
        <shortName evidence="3">LeuRS</shortName>
    </alternativeName>
</protein>
<reference key="1">
    <citation type="submission" date="2004-11" db="EMBL/GenBank/DDBJ databases">
        <authorList>
            <consortium name="The German cDNA consortium"/>
        </authorList>
    </citation>
    <scope>NUCLEOTIDE SEQUENCE [LARGE SCALE MRNA]</scope>
    <source>
        <tissue>Brain cortex</tissue>
    </source>
</reference>
<accession>Q5R614</accession>